<protein>
    <recommendedName>
        <fullName evidence="1">UPF0145 protein SYNPCC7002_A1337</fullName>
    </recommendedName>
</protein>
<comment type="similarity">
    <text evidence="1">Belongs to the UPF0145 family.</text>
</comment>
<feature type="chain" id="PRO_1000120019" description="UPF0145 protein SYNPCC7002_A1337">
    <location>
        <begin position="1"/>
        <end position="108"/>
    </location>
</feature>
<accession>B1XLP1</accession>
<gene>
    <name type="ordered locus">SYNPCC7002_A1337</name>
</gene>
<dbReference type="EMBL" id="CP000951">
    <property type="protein sequence ID" value="ACA99334.1"/>
    <property type="molecule type" value="Genomic_DNA"/>
</dbReference>
<dbReference type="RefSeq" id="WP_012306957.1">
    <property type="nucleotide sequence ID" value="NZ_JAHHPU010000001.1"/>
</dbReference>
<dbReference type="SMR" id="B1XLP1"/>
<dbReference type="KEGG" id="syp:SYNPCC7002_A1337"/>
<dbReference type="eggNOG" id="COG0393">
    <property type="taxonomic scope" value="Bacteria"/>
</dbReference>
<dbReference type="HOGENOM" id="CLU_117144_3_2_3"/>
<dbReference type="Proteomes" id="UP000001688">
    <property type="component" value="Chromosome"/>
</dbReference>
<dbReference type="Gene3D" id="3.30.110.70">
    <property type="entry name" value="Hypothetical protein apc22750. Chain B"/>
    <property type="match status" value="1"/>
</dbReference>
<dbReference type="HAMAP" id="MF_00338">
    <property type="entry name" value="UPF0145"/>
    <property type="match status" value="1"/>
</dbReference>
<dbReference type="InterPro" id="IPR035439">
    <property type="entry name" value="UPF0145_dom_sf"/>
</dbReference>
<dbReference type="InterPro" id="IPR002765">
    <property type="entry name" value="UPF0145_YbjQ-like"/>
</dbReference>
<dbReference type="PANTHER" id="PTHR34068">
    <property type="entry name" value="UPF0145 PROTEIN YBJQ"/>
    <property type="match status" value="1"/>
</dbReference>
<dbReference type="PANTHER" id="PTHR34068:SF1">
    <property type="entry name" value="UPF0145 PROTEIN YBJQ"/>
    <property type="match status" value="1"/>
</dbReference>
<dbReference type="Pfam" id="PF01906">
    <property type="entry name" value="YbjQ_1"/>
    <property type="match status" value="1"/>
</dbReference>
<dbReference type="SUPFAM" id="SSF117782">
    <property type="entry name" value="YbjQ-like"/>
    <property type="match status" value="1"/>
</dbReference>
<reference key="1">
    <citation type="submission" date="2008-02" db="EMBL/GenBank/DDBJ databases">
        <title>Complete sequence of Synechococcus sp. PCC 7002.</title>
        <authorList>
            <person name="Li T."/>
            <person name="Zhao J."/>
            <person name="Zhao C."/>
            <person name="Liu Z."/>
            <person name="Zhao F."/>
            <person name="Marquardt J."/>
            <person name="Nomura C.T."/>
            <person name="Persson S."/>
            <person name="Detter J.C."/>
            <person name="Richardson P.M."/>
            <person name="Lanz C."/>
            <person name="Schuster S.C."/>
            <person name="Wang J."/>
            <person name="Li S."/>
            <person name="Huang X."/>
            <person name="Cai T."/>
            <person name="Yu Z."/>
            <person name="Luo J."/>
            <person name="Zhao J."/>
            <person name="Bryant D.A."/>
        </authorList>
    </citation>
    <scope>NUCLEOTIDE SEQUENCE [LARGE SCALE GENOMIC DNA]</scope>
    <source>
        <strain>ATCC 27264 / PCC 7002 / PR-6</strain>
    </source>
</reference>
<organism>
    <name type="scientific">Picosynechococcus sp. (strain ATCC 27264 / PCC 7002 / PR-6)</name>
    <name type="common">Agmenellum quadruplicatum</name>
    <dbReference type="NCBI Taxonomy" id="32049"/>
    <lineage>
        <taxon>Bacteria</taxon>
        <taxon>Bacillati</taxon>
        <taxon>Cyanobacteriota</taxon>
        <taxon>Cyanophyceae</taxon>
        <taxon>Oscillatoriophycideae</taxon>
        <taxon>Chroococcales</taxon>
        <taxon>Geminocystaceae</taxon>
        <taxon>Picosynechococcus</taxon>
    </lineage>
</organism>
<proteinExistence type="inferred from homology"/>
<sequence length="108" mass="11468">MILSTTNTIEGATITSYQGVVTAEVVYGTNALRDFFAGIRDMIGGRTASYERIFEKGHQEALRELESNAQKRGADAVIGISMDTGTINVDDKGVLLLITATGTAVKLG</sequence>
<evidence type="ECO:0000255" key="1">
    <source>
        <dbReference type="HAMAP-Rule" id="MF_00338"/>
    </source>
</evidence>
<keyword id="KW-1185">Reference proteome</keyword>
<name>Y1337_PICP2</name>